<gene>
    <name evidence="20" type="primary">PLA2G3</name>
</gene>
<feature type="signal peptide" evidence="3">
    <location>
        <begin position="1"/>
        <end position="19"/>
    </location>
</feature>
<feature type="chain" id="PRO_0000022992" description="Group 3 secretory phospholipase A2" evidence="3">
    <location>
        <begin position="20"/>
        <end position="509"/>
    </location>
</feature>
<feature type="region of interest" description="Disordered" evidence="5">
    <location>
        <begin position="123"/>
        <end position="149"/>
    </location>
</feature>
<feature type="region of interest" description="Phospholipase A2-like" evidence="7 9 10">
    <location>
        <begin position="150"/>
        <end position="291"/>
    </location>
</feature>
<feature type="region of interest" description="Disordered" evidence="5">
    <location>
        <begin position="283"/>
        <end position="354"/>
    </location>
</feature>
<feature type="region of interest" description="Disordered" evidence="5">
    <location>
        <begin position="458"/>
        <end position="482"/>
    </location>
</feature>
<feature type="compositionally biased region" description="Low complexity" evidence="5">
    <location>
        <begin position="284"/>
        <end position="296"/>
    </location>
</feature>
<feature type="compositionally biased region" description="Basic residues" evidence="5">
    <location>
        <begin position="302"/>
        <end position="322"/>
    </location>
</feature>
<feature type="compositionally biased region" description="Basic and acidic residues" evidence="5">
    <location>
        <begin position="463"/>
        <end position="473"/>
    </location>
</feature>
<feature type="active site" evidence="4">
    <location>
        <position position="184"/>
    </location>
</feature>
<feature type="active site" evidence="1">
    <location>
        <position position="214"/>
    </location>
</feature>
<feature type="binding site" evidence="1">
    <location>
        <position position="158"/>
    </location>
    <ligand>
        <name>Ca(2+)</name>
        <dbReference type="ChEBI" id="CHEBI:29108"/>
    </ligand>
</feature>
<feature type="binding site" evidence="1">
    <location>
        <position position="160"/>
    </location>
    <ligand>
        <name>Ca(2+)</name>
        <dbReference type="ChEBI" id="CHEBI:29108"/>
    </ligand>
</feature>
<feature type="binding site" evidence="1">
    <location>
        <position position="162"/>
    </location>
    <ligand>
        <name>Ca(2+)</name>
        <dbReference type="ChEBI" id="CHEBI:29108"/>
    </ligand>
</feature>
<feature type="binding site" evidence="1">
    <location>
        <position position="185"/>
    </location>
    <ligand>
        <name>Ca(2+)</name>
        <dbReference type="ChEBI" id="CHEBI:29108"/>
    </ligand>
</feature>
<feature type="glycosylation site" description="N-linked (GlcNAc...) asparagine" evidence="9">
    <location>
        <position position="167"/>
    </location>
</feature>
<feature type="glycosylation site" description="N-linked (GlcNAc...) asparagine" evidence="9">
    <location>
        <position position="280"/>
    </location>
</feature>
<feature type="glycosylation site" description="N-linked (GlcNAc...) asparagine" evidence="3">
    <location>
        <position position="325"/>
    </location>
</feature>
<feature type="glycosylation site" description="N-linked (GlcNAc...) asparagine" evidence="3">
    <location>
        <position position="396"/>
    </location>
</feature>
<feature type="glycosylation site" description="N-linked (GlcNAc...) asparagine" evidence="3">
    <location>
        <position position="439"/>
    </location>
</feature>
<feature type="disulfide bond" evidence="1">
    <location>
        <begin position="159"/>
        <end position="181"/>
    </location>
</feature>
<feature type="disulfide bond" evidence="1">
    <location>
        <begin position="180"/>
        <end position="220"/>
    </location>
</feature>
<feature type="disulfide bond" evidence="1">
    <location>
        <begin position="187"/>
        <end position="213"/>
    </location>
</feature>
<feature type="disulfide bond" evidence="1">
    <location>
        <begin position="211"/>
        <end position="244"/>
    </location>
</feature>
<feature type="sequence variant" id="VAR_024555" description="In dbSNP:rs2232176." evidence="6 8">
    <original>S</original>
    <variation>A</variation>
    <location>
        <position position="70"/>
    </location>
</feature>
<feature type="sequence variant" id="VAR_024556" description="In dbSNP:rs2074734.">
    <original>E</original>
    <variation>Q</variation>
    <location>
        <position position="116"/>
    </location>
</feature>
<feature type="sequence variant" id="VAR_020288" description="In dbSNP:rs2074735.">
    <original>L</original>
    <variation>V</variation>
    <location>
        <position position="157"/>
    </location>
</feature>
<feature type="sequence variant" id="VAR_056581" description="In dbSNP:rs2232180.">
    <original>H</original>
    <variation>Y</variation>
    <location>
        <position position="307"/>
    </location>
</feature>
<feature type="sequence variant" id="VAR_024557" description="In dbSNP:rs2072193.">
    <original>S</original>
    <variation>R</variation>
    <location>
        <position position="322"/>
    </location>
</feature>
<feature type="sequence variant" id="VAR_034366" description="In dbSNP:rs2232183.">
    <original>R</original>
    <variation>Q</variation>
    <location>
        <position position="378"/>
    </location>
</feature>
<feature type="mutagenesis site" description="Loss of glycosylation." evidence="9">
    <original>N</original>
    <variation>S</variation>
    <location>
        <position position="167"/>
    </location>
</feature>
<feature type="mutagenesis site" description="Impairs PGE2 synthesis. Impairs PGD2 synthesis. Impairs mast cell degranulation. Impairs neurite outgrowth." evidence="7 9 10 13">
    <original>H</original>
    <variation>Q</variation>
    <location>
        <position position="184"/>
    </location>
</feature>
<feature type="mutagenesis site" description="Loss of glycosylation." evidence="9">
    <original>N</original>
    <variation>S</variation>
    <location>
        <position position="280"/>
    </location>
</feature>
<keyword id="KW-0106">Calcium</keyword>
<keyword id="KW-1003">Cell membrane</keyword>
<keyword id="KW-0970">Cilium biogenesis/degradation</keyword>
<keyword id="KW-0963">Cytoplasm</keyword>
<keyword id="KW-0206">Cytoskeleton</keyword>
<keyword id="KW-1015">Disulfide bond</keyword>
<keyword id="KW-0967">Endosome</keyword>
<keyword id="KW-0325">Glycoprotein</keyword>
<keyword id="KW-0378">Hydrolase</keyword>
<keyword id="KW-0443">Lipid metabolism</keyword>
<keyword id="KW-0467">Mast cell degranulation</keyword>
<keyword id="KW-0472">Membrane</keyword>
<keyword id="KW-0479">Metal-binding</keyword>
<keyword id="KW-1208">Phospholipid metabolism</keyword>
<keyword id="KW-1267">Proteomics identification</keyword>
<keyword id="KW-1185">Reference proteome</keyword>
<keyword id="KW-0964">Secreted</keyword>
<keyword id="KW-0732">Signal</keyword>
<accession>Q9NZ20</accession>
<accession>O95768</accession>
<reference key="1">
    <citation type="journal article" date="2000" name="J. Biol. Chem.">
        <title>Novel human secreted phospholipase A2 with homology to the group III bee venom enzyme.</title>
        <authorList>
            <person name="Valentin E."/>
            <person name="Ghomashchi F."/>
            <person name="Gelb M.H."/>
            <person name="Lazdunski M."/>
            <person name="Lambeau G."/>
        </authorList>
    </citation>
    <scope>NUCLEOTIDE SEQUENCE [MRNA]</scope>
    <scope>CHARACTERIZATION</scope>
    <scope>VARIANT ALA-70</scope>
</reference>
<reference key="2">
    <citation type="journal article" date="1999" name="Nature">
        <title>The DNA sequence of human chromosome 22.</title>
        <authorList>
            <person name="Dunham I."/>
            <person name="Hunt A.R."/>
            <person name="Collins J.E."/>
            <person name="Bruskiewich R."/>
            <person name="Beare D.M."/>
            <person name="Clamp M."/>
            <person name="Smink L.J."/>
            <person name="Ainscough R."/>
            <person name="Almeida J.P."/>
            <person name="Babbage A.K."/>
            <person name="Bagguley C."/>
            <person name="Bailey J."/>
            <person name="Barlow K.F."/>
            <person name="Bates K.N."/>
            <person name="Beasley O.P."/>
            <person name="Bird C.P."/>
            <person name="Blakey S.E."/>
            <person name="Bridgeman A.M."/>
            <person name="Buck D."/>
            <person name="Burgess J."/>
            <person name="Burrill W.D."/>
            <person name="Burton J."/>
            <person name="Carder C."/>
            <person name="Carter N.P."/>
            <person name="Chen Y."/>
            <person name="Clark G."/>
            <person name="Clegg S.M."/>
            <person name="Cobley V.E."/>
            <person name="Cole C.G."/>
            <person name="Collier R.E."/>
            <person name="Connor R."/>
            <person name="Conroy D."/>
            <person name="Corby N.R."/>
            <person name="Coville G.J."/>
            <person name="Cox A.V."/>
            <person name="Davis J."/>
            <person name="Dawson E."/>
            <person name="Dhami P.D."/>
            <person name="Dockree C."/>
            <person name="Dodsworth S.J."/>
            <person name="Durbin R.M."/>
            <person name="Ellington A.G."/>
            <person name="Evans K.L."/>
            <person name="Fey J.M."/>
            <person name="Fleming K."/>
            <person name="French L."/>
            <person name="Garner A.A."/>
            <person name="Gilbert J.G.R."/>
            <person name="Goward M.E."/>
            <person name="Grafham D.V."/>
            <person name="Griffiths M.N.D."/>
            <person name="Hall C."/>
            <person name="Hall R.E."/>
            <person name="Hall-Tamlyn G."/>
            <person name="Heathcott R.W."/>
            <person name="Ho S."/>
            <person name="Holmes S."/>
            <person name="Hunt S.E."/>
            <person name="Jones M.C."/>
            <person name="Kershaw J."/>
            <person name="Kimberley A.M."/>
            <person name="King A."/>
            <person name="Laird G.K."/>
            <person name="Langford C.F."/>
            <person name="Leversha M.A."/>
            <person name="Lloyd C."/>
            <person name="Lloyd D.M."/>
            <person name="Martyn I.D."/>
            <person name="Mashreghi-Mohammadi M."/>
            <person name="Matthews L.H."/>
            <person name="Mccann O.T."/>
            <person name="Mcclay J."/>
            <person name="Mclaren S."/>
            <person name="McMurray A.A."/>
            <person name="Milne S.A."/>
            <person name="Mortimore B.J."/>
            <person name="Odell C.N."/>
            <person name="Pavitt R."/>
            <person name="Pearce A.V."/>
            <person name="Pearson D."/>
            <person name="Phillimore B.J.C.T."/>
            <person name="Phillips S.H."/>
            <person name="Plumb R.W."/>
            <person name="Ramsay H."/>
            <person name="Ramsey Y."/>
            <person name="Rogers L."/>
            <person name="Ross M.T."/>
            <person name="Scott C.E."/>
            <person name="Sehra H.K."/>
            <person name="Skuce C.D."/>
            <person name="Smalley S."/>
            <person name="Smith M.L."/>
            <person name="Soderlund C."/>
            <person name="Spragon L."/>
            <person name="Steward C.A."/>
            <person name="Sulston J.E."/>
            <person name="Swann R.M."/>
            <person name="Vaudin M."/>
            <person name="Wall M."/>
            <person name="Wallis J.M."/>
            <person name="Whiteley M.N."/>
            <person name="Willey D.L."/>
            <person name="Williams L."/>
            <person name="Williams S.A."/>
            <person name="Williamson H."/>
            <person name="Wilmer T.E."/>
            <person name="Wilming L."/>
            <person name="Wright C.L."/>
            <person name="Hubbard T."/>
            <person name="Bentley D.R."/>
            <person name="Beck S."/>
            <person name="Rogers J."/>
            <person name="Shimizu N."/>
            <person name="Minoshima S."/>
            <person name="Kawasaki K."/>
            <person name="Sasaki T."/>
            <person name="Asakawa S."/>
            <person name="Kudoh J."/>
            <person name="Shintani A."/>
            <person name="Shibuya K."/>
            <person name="Yoshizaki Y."/>
            <person name="Aoki N."/>
            <person name="Mitsuyama S."/>
            <person name="Roe B.A."/>
            <person name="Chen F."/>
            <person name="Chu L."/>
            <person name="Crabtree J."/>
            <person name="Deschamps S."/>
            <person name="Do A."/>
            <person name="Do T."/>
            <person name="Dorman A."/>
            <person name="Fang F."/>
            <person name="Fu Y."/>
            <person name="Hu P."/>
            <person name="Hua A."/>
            <person name="Kenton S."/>
            <person name="Lai H."/>
            <person name="Lao H.I."/>
            <person name="Lewis J."/>
            <person name="Lewis S."/>
            <person name="Lin S.-P."/>
            <person name="Loh P."/>
            <person name="Malaj E."/>
            <person name="Nguyen T."/>
            <person name="Pan H."/>
            <person name="Phan S."/>
            <person name="Qi S."/>
            <person name="Qian Y."/>
            <person name="Ray L."/>
            <person name="Ren Q."/>
            <person name="Shaull S."/>
            <person name="Sloan D."/>
            <person name="Song L."/>
            <person name="Wang Q."/>
            <person name="Wang Y."/>
            <person name="Wang Z."/>
            <person name="White J."/>
            <person name="Willingham D."/>
            <person name="Wu H."/>
            <person name="Yao Z."/>
            <person name="Zhan M."/>
            <person name="Zhang G."/>
            <person name="Chissoe S."/>
            <person name="Murray J."/>
            <person name="Miller N."/>
            <person name="Minx P."/>
            <person name="Fulton R."/>
            <person name="Johnson D."/>
            <person name="Bemis G."/>
            <person name="Bentley D."/>
            <person name="Bradshaw H."/>
            <person name="Bourne S."/>
            <person name="Cordes M."/>
            <person name="Du Z."/>
            <person name="Fulton L."/>
            <person name="Goela D."/>
            <person name="Graves T."/>
            <person name="Hawkins J."/>
            <person name="Hinds K."/>
            <person name="Kemp K."/>
            <person name="Latreille P."/>
            <person name="Layman D."/>
            <person name="Ozersky P."/>
            <person name="Rohlfing T."/>
            <person name="Scheet P."/>
            <person name="Walker C."/>
            <person name="Wamsley A."/>
            <person name="Wohldmann P."/>
            <person name="Pepin K."/>
            <person name="Nelson J."/>
            <person name="Korf I."/>
            <person name="Bedell J.A."/>
            <person name="Hillier L.W."/>
            <person name="Mardis E."/>
            <person name="Waterston R."/>
            <person name="Wilson R."/>
            <person name="Emanuel B.S."/>
            <person name="Shaikh T."/>
            <person name="Kurahashi H."/>
            <person name="Saitta S."/>
            <person name="Budarf M.L."/>
            <person name="McDermid H.E."/>
            <person name="Johnson A."/>
            <person name="Wong A.C.C."/>
            <person name="Morrow B.E."/>
            <person name="Edelmann L."/>
            <person name="Kim U.J."/>
            <person name="Shizuya H."/>
            <person name="Simon M.I."/>
            <person name="Dumanski J.P."/>
            <person name="Peyrard M."/>
            <person name="Kedra D."/>
            <person name="Seroussi E."/>
            <person name="Fransson I."/>
            <person name="Tapia I."/>
            <person name="Bruder C.E."/>
            <person name="O'Brien K.P."/>
            <person name="Wilkinson P."/>
            <person name="Bodenteich A."/>
            <person name="Hartman K."/>
            <person name="Hu X."/>
            <person name="Khan A.S."/>
            <person name="Lane L."/>
            <person name="Tilahun Y."/>
            <person name="Wright H."/>
        </authorList>
    </citation>
    <scope>NUCLEOTIDE SEQUENCE [LARGE SCALE GENOMIC DNA]</scope>
</reference>
<reference key="3">
    <citation type="journal article" date="2004" name="Genome Res.">
        <title>The status, quality, and expansion of the NIH full-length cDNA project: the Mammalian Gene Collection (MGC).</title>
        <authorList>
            <consortium name="The MGC Project Team"/>
        </authorList>
    </citation>
    <scope>NUCLEOTIDE SEQUENCE [LARGE SCALE MRNA]</scope>
    <scope>VARIANT ALA-70</scope>
    <source>
        <tissue>Brain</tissue>
    </source>
</reference>
<reference key="4">
    <citation type="journal article" date="2003" name="J. Biol. Chem.">
        <title>Cellular arachidonate-releasing function of novel classes of secretory phospholipase A2s (groups III and XII).</title>
        <authorList>
            <person name="Murakami M."/>
            <person name="Masuda S."/>
            <person name="Shimbara S."/>
            <person name="Bezzine S."/>
            <person name="Lazdunski M."/>
            <person name="Lambeau G."/>
            <person name="Gelb M.H."/>
            <person name="Matsukura S."/>
            <person name="Kokubu F."/>
            <person name="Adachi M."/>
            <person name="Kudo I."/>
        </authorList>
    </citation>
    <scope>FUNCTION</scope>
    <scope>CATALYTIC ACTIVITY</scope>
    <scope>ACTIVITY REGULATION</scope>
    <scope>SUBCELLULAR LOCATION</scope>
    <scope>DOMAIN</scope>
    <scope>MUTAGENESIS OF HIS-184</scope>
</reference>
<reference key="5">
    <citation type="journal article" date="2005" name="J. Biol. Chem.">
        <title>Cellular distribution, post-translational modification, and tumorigenic potential of human group III secreted phospholipase A(2).</title>
        <authorList>
            <person name="Murakami M."/>
            <person name="Masuda S."/>
            <person name="Shimbara S."/>
            <person name="Ishikawa Y."/>
            <person name="Ishii T."/>
            <person name="Kudo I."/>
        </authorList>
    </citation>
    <scope>FUNCTION</scope>
    <scope>CATALYTIC ACTIVITY</scope>
    <scope>DOMAIN</scope>
    <scope>PTM</scope>
    <scope>TISSUE SPECIFICITY</scope>
    <scope>INDUCTION</scope>
    <scope>GLYCOSYLATION AT ASN-167 AND ASN-280</scope>
    <scope>MUTAGENESIS OF ASN-167; HIS-184 AND ASN-280</scope>
</reference>
<reference key="6">
    <citation type="journal article" date="2008" name="Biochem. J.">
        <title>Human group III secreted phospholipase A2 promotes neuronal outgrowth and survival.</title>
        <authorList>
            <person name="Masuda S."/>
            <person name="Yamamoto K."/>
            <person name="Hirabayashi T."/>
            <person name="Ishikawa Y."/>
            <person name="Ishii T."/>
            <person name="Kudo I."/>
            <person name="Murakami M."/>
        </authorList>
    </citation>
    <scope>FUNCTION</scope>
    <scope>TISSUE SPECIFICITY</scope>
    <scope>DOMAIN</scope>
    <scope>MUTAGENESIS OF HIS-184</scope>
</reference>
<reference key="7">
    <citation type="journal article" date="2008" name="J. Biol. Chem.">
        <title>Analyses of group III secreted phospholipase A2 transgenic mice reveal potential participation of this enzyme in plasma lipoprotein modification, macrophage foam cell formation, and atherosclerosis.</title>
        <authorList>
            <person name="Sato H."/>
            <person name="Kato R."/>
            <person name="Isogai Y."/>
            <person name="Saka G."/>
            <person name="Ohtsuki M."/>
            <person name="Taketomi Y."/>
            <person name="Yamamoto K."/>
            <person name="Tsutsumi K."/>
            <person name="Yamada J."/>
            <person name="Masuda S."/>
            <person name="Ishikawa Y."/>
            <person name="Ishii T."/>
            <person name="Kobayashi T."/>
            <person name="Ikeda K."/>
            <person name="Taguchi R."/>
            <person name="Hatakeyama S."/>
            <person name="Hara S."/>
            <person name="Kudo I."/>
            <person name="Itabe H."/>
            <person name="Murakami M."/>
        </authorList>
    </citation>
    <scope>FUNCTION</scope>
    <scope>CATALYTIC ACTIVITY</scope>
    <scope>TISSUE SPECIFICITY</scope>
</reference>
<reference key="8">
    <citation type="journal article" date="2008" name="Proc. Natl. Acad. Sci. U.S.A.">
        <title>A quantitative atlas of mitotic phosphorylation.</title>
        <authorList>
            <person name="Dephoure N."/>
            <person name="Zhou C."/>
            <person name="Villen J."/>
            <person name="Beausoleil S.A."/>
            <person name="Bakalarski C.E."/>
            <person name="Elledge S.J."/>
            <person name="Gygi S.P."/>
        </authorList>
    </citation>
    <scope>IDENTIFICATION BY MASS SPECTROMETRY [LARGE SCALE ANALYSIS]</scope>
    <source>
        <tissue>Cervix carcinoma</tissue>
    </source>
</reference>
<reference key="9">
    <citation type="journal article" date="2010" name="Nature">
        <title>Functional genomic screen for modulators of ciliogenesis and cilium length.</title>
        <authorList>
            <person name="Kim J."/>
            <person name="Lee J.E."/>
            <person name="Heynen-Genel S."/>
            <person name="Suyama E."/>
            <person name="Ono K."/>
            <person name="Lee K."/>
            <person name="Ideker T."/>
            <person name="Aza-Blanc P."/>
            <person name="Gleeson J.G."/>
        </authorList>
    </citation>
    <scope>FUNCTION</scope>
    <scope>SUBCELLULAR LOCATION</scope>
</reference>
<reference key="10">
    <citation type="journal article" date="2013" name="Nat. Immunol.">
        <title>Mast cell maturation is driven via a group III phospholipase A2-prostaglandin D2-DP1 receptor paracrine axis.</title>
        <authorList>
            <person name="Taketomi Y."/>
            <person name="Ueno N."/>
            <person name="Kojima T."/>
            <person name="Sato H."/>
            <person name="Murase R."/>
            <person name="Yamamoto K."/>
            <person name="Tanaka S."/>
            <person name="Sakanaka M."/>
            <person name="Nakamura M."/>
            <person name="Nishito Y."/>
            <person name="Kawana M."/>
            <person name="Kambe N."/>
            <person name="Ikeda K."/>
            <person name="Taguchi R."/>
            <person name="Nakamizo S."/>
            <person name="Kabashima K."/>
            <person name="Gelb M.H."/>
            <person name="Arita M."/>
            <person name="Yokomizo T."/>
            <person name="Nakamura M."/>
            <person name="Watanabe K."/>
            <person name="Hirai H."/>
            <person name="Nakamura M."/>
            <person name="Okayama Y."/>
            <person name="Ra C."/>
            <person name="Aritake K."/>
            <person name="Urade Y."/>
            <person name="Morimoto K."/>
            <person name="Sugimoto Y."/>
            <person name="Shimizu T."/>
            <person name="Narumiya S."/>
            <person name="Hara S."/>
            <person name="Murakami M."/>
        </authorList>
    </citation>
    <scope>FUNCTION</scope>
    <scope>CATALYTIC ACTIVITY</scope>
    <scope>TISSUE SPECIFICITY</scope>
    <scope>MUTAGENESIS OF HIS-184</scope>
</reference>
<reference key="11">
    <citation type="journal article" date="2017" name="Sci. Rep.">
        <title>Group III phospholipase A2 promotes colitis and colorectal cancer.</title>
        <authorList>
            <person name="Murase R."/>
            <person name="Taketomi Y."/>
            <person name="Miki Y."/>
            <person name="Nishito Y."/>
            <person name="Saito M."/>
            <person name="Fukami K."/>
            <person name="Yamamoto K."/>
            <person name="Murakami M."/>
        </authorList>
    </citation>
    <scope>FUNCTION</scope>
</reference>
<proteinExistence type="evidence at protein level"/>
<sequence>MGVQAGLFGMLGFLGVALGGSPALRWYRTSCHLTKAVPGNPLGYLSFLAKDAQGLALIHARWDAHRRLQSCSWEDEPELTAAYGALCAHETAWGSFIHTPGPELQRALATLQSQWEACRALEESPAGARKKRAAGQSGVPGGGHQREKRGWTMPGTLWCGVGDSAGNSSELGVFQGPDLCCREHDRCPQNISPLQYNYGIRNYRFHTISHCDCDTRFQQCLQNQHDSISDIVGVAFFNVLEIPCFVLEEQEACVAWYWWGGCRMYGTVPLARLQPRTFYNASWSSRATSPTPSSRSPAPPKPRQKQHLRKGPPHQKGSKRPSKANTTALQDPMVSPRLDVAPTGLQGPQGGLKPQGARWVCRSFRRHLDQCEHQIGPREIEFQLLNSAQEPLFHCNCTRRLARFLRLHSPPEVTNMLWELLGTTCFKLAPPLDCVEGKNCSRDPRAIRVSARHLRRLQQRRHQLQDKGTDERQPWPSEPLRGPMSFYNQCLQLTQAARRPDRQQKSWSQ</sequence>
<protein>
    <recommendedName>
        <fullName>Group 3 secretory phospholipase A2</fullName>
        <ecNumber evidence="7 11">3.1.1.4</ecNumber>
    </recommendedName>
    <alternativeName>
        <fullName>Group III secretory phospholipase A2</fullName>
        <shortName>GIII sPLA2</shortName>
        <shortName>sPLA2-III</shortName>
    </alternativeName>
    <alternativeName>
        <fullName>Phosphatidylcholine 2-acylhydrolase 3</fullName>
    </alternativeName>
</protein>
<name>PA2G3_HUMAN</name>
<comment type="function">
    <text evidence="2 7 9 10 11 12 13 14">Secretory calcium-dependent phospholipase A2 that primarily targets extracellular phospholipids. Hydrolyzes the ester bond of the fatty acyl group attached at sn-2 position of phospholipids without apparent head group selectivity (PubMed:12522102, PubMed:15863501, PubMed:18801741, PubMed:28947740). Contributes to phospholipid remodeling of low-density lipoprotein (LDL) and high-density lipoprotein (HDL) particles. Hydrolyzes LDL phospholipids releasing unsaturated fatty acids that regulate macrophage differentiation toward foam cells (PubMed:18801741). May act in an autocrine and paracrine manner (PubMed:23624557). Secreted by immature mast cells, acts on nearby fibroblasts upstream to PTDGS to synthesize prostaglandin D2 (PGD2), which in turn promotes mast cell maturation and degranulation via PTGDR (PubMed:23624557). Secreted by epididymal epithelium, acts on immature sperm cells within the duct, modulating the degree of unsaturation of the fatty acyl components of phosphatidylcholines required for acrosome assembly and sperm cell motility. Facilitates the replacement of fatty acyl chains in phosphatidylcholines in sperm membranes from omega-6 and omega-9 to omega-3 polyunsaturated fatty acids (PUFAs). Coupled to lipoxygenase pathway, may process omega-6 PUFAs to generate oxygenated lipid mediators in the male reproductive tract (By similarity). At pericentrosomal preciliary compartment, negatively regulates ciliogenesis likely by regulating endocytotic recycling of ciliary membrane protein (PubMed:20393563). Coupled to cyclooxygenase pathway provides arachidonate to generate prostaglandin E2 (PGE2), a potent immunomodulatory lipid in inflammation and tumorigenesis (PubMed:12522102, PubMed:15863501). At colonic epithelial barrier, preferentially hydrolyzes phospholipids having arachidonate and docosahexaenoate at sn-2 position, contributing to the generation of oxygenated metabolites involved in colonic stem cell homeostasis (PubMed:28947740). Releases C16:0 and C18:0 lysophosphatidylcholine subclasses from neuron plasma membranes and promotes neurite outgrowth and neuron survival (PubMed:17868035).</text>
</comment>
<comment type="catalytic activity">
    <reaction evidence="7 11">
        <text>a 1,2-diacyl-sn-glycero-3-phosphocholine + H2O = a 1-acyl-sn-glycero-3-phosphocholine + a fatty acid + H(+)</text>
        <dbReference type="Rhea" id="RHEA:15801"/>
        <dbReference type="ChEBI" id="CHEBI:15377"/>
        <dbReference type="ChEBI" id="CHEBI:15378"/>
        <dbReference type="ChEBI" id="CHEBI:28868"/>
        <dbReference type="ChEBI" id="CHEBI:57643"/>
        <dbReference type="ChEBI" id="CHEBI:58168"/>
        <dbReference type="EC" id="3.1.1.4"/>
    </reaction>
    <physiologicalReaction direction="left-to-right" evidence="16 18">
        <dbReference type="Rhea" id="RHEA:15802"/>
    </physiologicalReaction>
</comment>
<comment type="catalytic activity">
    <reaction evidence="7">
        <text>1-hexadecanoyl-2-(9Z,12Z-octadecadienoyl)-sn-glycero-3-phosphocholine + H2O = (9Z,12Z)-octadecadienoate + 1-hexadecanoyl-sn-glycero-3-phosphocholine + H(+)</text>
        <dbReference type="Rhea" id="RHEA:40811"/>
        <dbReference type="ChEBI" id="CHEBI:15377"/>
        <dbReference type="ChEBI" id="CHEBI:15378"/>
        <dbReference type="ChEBI" id="CHEBI:30245"/>
        <dbReference type="ChEBI" id="CHEBI:72998"/>
        <dbReference type="ChEBI" id="CHEBI:73002"/>
    </reaction>
    <physiologicalReaction direction="left-to-right" evidence="16">
        <dbReference type="Rhea" id="RHEA:40812"/>
    </physiologicalReaction>
</comment>
<comment type="catalytic activity">
    <reaction evidence="7">
        <text>1-hexadecanoyl-2-(5Z,8Z,11Z,14Z-eicosatetraenoyl)-sn-glycero-3-phosphocholine + H2O = 1-hexadecanoyl-sn-glycero-3-phosphocholine + (5Z,8Z,11Z,14Z)-eicosatetraenoate + H(+)</text>
        <dbReference type="Rhea" id="RHEA:40427"/>
        <dbReference type="ChEBI" id="CHEBI:15377"/>
        <dbReference type="ChEBI" id="CHEBI:15378"/>
        <dbReference type="ChEBI" id="CHEBI:32395"/>
        <dbReference type="ChEBI" id="CHEBI:72998"/>
        <dbReference type="ChEBI" id="CHEBI:73003"/>
    </reaction>
    <physiologicalReaction direction="left-to-right" evidence="16">
        <dbReference type="Rhea" id="RHEA:40428"/>
    </physiologicalReaction>
</comment>
<comment type="catalytic activity">
    <reaction evidence="7 9 11 13">
        <text>1-hexadecanoyl-2-(9Z,12Z-octadecadienoyl)-sn-glycero-3-phosphoethanolamine + H2O = 1-hexadecanoyl-sn-glycero-3-phosphoethanolamine + (9Z,12Z)-octadecadienoate + H(+)</text>
        <dbReference type="Rhea" id="RHEA:40815"/>
        <dbReference type="ChEBI" id="CHEBI:15377"/>
        <dbReference type="ChEBI" id="CHEBI:15378"/>
        <dbReference type="ChEBI" id="CHEBI:30245"/>
        <dbReference type="ChEBI" id="CHEBI:73004"/>
        <dbReference type="ChEBI" id="CHEBI:73008"/>
    </reaction>
    <physiologicalReaction direction="left-to-right" evidence="16 17 18 19">
        <dbReference type="Rhea" id="RHEA:40816"/>
    </physiologicalReaction>
</comment>
<comment type="catalytic activity">
    <reaction evidence="7">
        <text>1-hexadecanoyl-2-(5Z,8Z,11Z,14Z-eicosatetraenoyl)-sn-glycero-3-phosphoethanolamine + H2O = 1-hexadecanoyl-sn-glycero-3-phosphoethanolamine + (5Z,8Z,11Z,14Z)-eicosatetraenoate + H(+)</text>
        <dbReference type="Rhea" id="RHEA:40431"/>
        <dbReference type="ChEBI" id="CHEBI:15377"/>
        <dbReference type="ChEBI" id="CHEBI:15378"/>
        <dbReference type="ChEBI" id="CHEBI:32395"/>
        <dbReference type="ChEBI" id="CHEBI:73004"/>
        <dbReference type="ChEBI" id="CHEBI:73009"/>
    </reaction>
    <physiologicalReaction direction="left-to-right" evidence="16">
        <dbReference type="Rhea" id="RHEA:40432"/>
    </physiologicalReaction>
</comment>
<comment type="cofactor">
    <cofactor evidence="1">
        <name>Ca(2+)</name>
        <dbReference type="ChEBI" id="CHEBI:29108"/>
    </cofactor>
    <text evidence="1">Binds 1 Ca(2+) ion.</text>
</comment>
<comment type="activity regulation">
    <text evidence="7">Arachidonic acid release is markedly increased by glypican, a glycosylphosphatidylinositol-anchored heparan sulfate proteoglycan.</text>
</comment>
<comment type="subcellular location">
    <subcellularLocation>
        <location evidence="7">Secreted</location>
    </subcellularLocation>
    <subcellularLocation>
        <location evidence="7">Cell membrane</location>
    </subcellularLocation>
    <subcellularLocation>
        <location evidence="12">Cytoplasm</location>
        <location evidence="12">Cytoskeleton</location>
        <location evidence="12">Microtubule organizing center</location>
        <location evidence="12">Centrosome</location>
        <location evidence="12">Centriole</location>
    </subcellularLocation>
    <subcellularLocation>
        <location evidence="12">Recycling endosome</location>
    </subcellularLocation>
    <text evidence="12">Localized at pericentrosomal preciliary compartment.</text>
</comment>
<comment type="tissue specificity">
    <text evidence="9 10 11 13">Expressed in kidney, heart, liver, and skeletal muscle. Also present in placenta and peripheral blood leukocytes. Not detected in colon, thymus, spleen and small intestine. In lung, expressed in bronchial epithelial cells and alveolar macrophages, but scarcely detected in alveolar epithelium, arterial walls and interstitial fibroblasts (at protein level). In joints of osteoarthritis and rheumatoid arthritis, expressed in endothelial cells (at protein level). In normal heart, detected in some vessels. In myocardial tissues with acute infarction, expressed in vascular endothelial cells adjacent to cardiomyocytes and those in lesions with granulation. Expression in cardiomyocytes is scarce (at protein level). In uterus, breast and colon cancers, detected in tumor cells and neighboring microvascular endothelium, but not in normal glandular tissues (at protein level) (PubMed:15863501). Expressed in dermal resting mast cells (at protein level) and pulmonary mast cells (PubMed:23624557). Expressed in neuronal fibers (at protein level) (PubMed:17868035). Highly expressed in dorsal root ganglia neurons (at protein level) (PubMed:17868035). Expressed in Purkinje cells in cerebellum (at protein level) (PubMed:17868035). In stomach is preferentially expressed in neuronal fibers and in microvascular endothelium (PubMed:17868035). Sparsely expressed in normal aorta (at protein level). Highly expressed in macrophages and smooth muscle cells in aorta with atheroma (PubMed:18801741).</text>
</comment>
<comment type="induction">
    <text evidence="9">By IL1B/interleukin-1 beta and TNF in microvascular endothelial cells (at protein level).</text>
</comment>
<comment type="domain">
    <text evidence="7 9 10">The phospholipase A2-like domain represents the fully processed form after N- and C-termini are cleaved off. It is the secreted mature form found in biological fluids.</text>
</comment>
<comment type="PTM">
    <text evidence="9">N-glycosylation does not affect the catalytic activity, but is required for proper secretion. A nonglycosylated form is observed in several cell types.</text>
</comment>
<comment type="PTM">
    <text evidence="17">In several cell types, the N- and C-termini are cleaved off.</text>
</comment>
<comment type="similarity">
    <text evidence="15">Belongs to the phospholipase A2 family.</text>
</comment>
<comment type="sequence caution" evidence="15">
    <conflict type="erroneous gene model prediction">
        <sequence resource="EMBL-CDS" id="AAD15617"/>
    </conflict>
</comment>
<evidence type="ECO:0000250" key="1">
    <source>
        <dbReference type="UniProtKB" id="P00630"/>
    </source>
</evidence>
<evidence type="ECO:0000250" key="2">
    <source>
        <dbReference type="UniProtKB" id="Q8BZT7"/>
    </source>
</evidence>
<evidence type="ECO:0000255" key="3"/>
<evidence type="ECO:0000255" key="4">
    <source>
        <dbReference type="PROSITE-ProRule" id="PRU10035"/>
    </source>
</evidence>
<evidence type="ECO:0000256" key="5">
    <source>
        <dbReference type="SAM" id="MobiDB-lite"/>
    </source>
</evidence>
<evidence type="ECO:0000269" key="6">
    <source>
    </source>
</evidence>
<evidence type="ECO:0000269" key="7">
    <source>
    </source>
</evidence>
<evidence type="ECO:0000269" key="8">
    <source>
    </source>
</evidence>
<evidence type="ECO:0000269" key="9">
    <source>
    </source>
</evidence>
<evidence type="ECO:0000269" key="10">
    <source>
    </source>
</evidence>
<evidence type="ECO:0000269" key="11">
    <source>
    </source>
</evidence>
<evidence type="ECO:0000269" key="12">
    <source>
    </source>
</evidence>
<evidence type="ECO:0000269" key="13">
    <source>
    </source>
</evidence>
<evidence type="ECO:0000269" key="14">
    <source>
    </source>
</evidence>
<evidence type="ECO:0000305" key="15"/>
<evidence type="ECO:0000305" key="16">
    <source>
    </source>
</evidence>
<evidence type="ECO:0000305" key="17">
    <source>
    </source>
</evidence>
<evidence type="ECO:0000305" key="18">
    <source>
    </source>
</evidence>
<evidence type="ECO:0000305" key="19">
    <source>
    </source>
</evidence>
<evidence type="ECO:0000312" key="20">
    <source>
        <dbReference type="HGNC" id="HGNC:17934"/>
    </source>
</evidence>
<organism>
    <name type="scientific">Homo sapiens</name>
    <name type="common">Human</name>
    <dbReference type="NCBI Taxonomy" id="9606"/>
    <lineage>
        <taxon>Eukaryota</taxon>
        <taxon>Metazoa</taxon>
        <taxon>Chordata</taxon>
        <taxon>Craniata</taxon>
        <taxon>Vertebrata</taxon>
        <taxon>Euteleostomi</taxon>
        <taxon>Mammalia</taxon>
        <taxon>Eutheria</taxon>
        <taxon>Euarchontoglires</taxon>
        <taxon>Primates</taxon>
        <taxon>Haplorrhini</taxon>
        <taxon>Catarrhini</taxon>
        <taxon>Hominidae</taxon>
        <taxon>Homo</taxon>
    </lineage>
</organism>
<dbReference type="EC" id="3.1.1.4" evidence="7 11"/>
<dbReference type="EMBL" id="AF220490">
    <property type="protein sequence ID" value="AAF44746.1"/>
    <property type="molecule type" value="mRNA"/>
</dbReference>
<dbReference type="EMBL" id="AC005005">
    <property type="protein sequence ID" value="AAD15617.1"/>
    <property type="status" value="ALT_SEQ"/>
    <property type="molecule type" value="Genomic_DNA"/>
</dbReference>
<dbReference type="EMBL" id="BC025316">
    <property type="protein sequence ID" value="AAH25316.1"/>
    <property type="molecule type" value="mRNA"/>
</dbReference>
<dbReference type="CCDS" id="CCDS13889.1"/>
<dbReference type="RefSeq" id="NP_056530.2">
    <property type="nucleotide sequence ID" value="NM_015715.5"/>
</dbReference>
<dbReference type="SMR" id="Q9NZ20"/>
<dbReference type="BioGRID" id="119074">
    <property type="interactions" value="32"/>
</dbReference>
<dbReference type="FunCoup" id="Q9NZ20">
    <property type="interactions" value="500"/>
</dbReference>
<dbReference type="IntAct" id="Q9NZ20">
    <property type="interactions" value="4"/>
</dbReference>
<dbReference type="STRING" id="9606.ENSP00000215885"/>
<dbReference type="BindingDB" id="Q9NZ20"/>
<dbReference type="ChEMBL" id="CHEMBL4667"/>
<dbReference type="SwissLipids" id="SLP:000001086"/>
<dbReference type="GlyCosmos" id="Q9NZ20">
    <property type="glycosylation" value="5 sites, No reported glycans"/>
</dbReference>
<dbReference type="GlyGen" id="Q9NZ20">
    <property type="glycosylation" value="6 sites, 3 N-linked glycans (3 sites)"/>
</dbReference>
<dbReference type="iPTMnet" id="Q9NZ20"/>
<dbReference type="PhosphoSitePlus" id="Q9NZ20"/>
<dbReference type="BioMuta" id="PLA2G3"/>
<dbReference type="DMDM" id="317373314"/>
<dbReference type="MassIVE" id="Q9NZ20"/>
<dbReference type="PaxDb" id="9606-ENSP00000215885"/>
<dbReference type="PeptideAtlas" id="Q9NZ20"/>
<dbReference type="ProteomicsDB" id="83316"/>
<dbReference type="Antibodypedia" id="11027">
    <property type="antibodies" value="184 antibodies from 23 providers"/>
</dbReference>
<dbReference type="DNASU" id="50487"/>
<dbReference type="Ensembl" id="ENST00000215885.4">
    <property type="protein sequence ID" value="ENSP00000215885.3"/>
    <property type="gene ID" value="ENSG00000100078.4"/>
</dbReference>
<dbReference type="GeneID" id="50487"/>
<dbReference type="KEGG" id="hsa:50487"/>
<dbReference type="MANE-Select" id="ENST00000215885.4">
    <property type="protein sequence ID" value="ENSP00000215885.3"/>
    <property type="RefSeq nucleotide sequence ID" value="NM_015715.5"/>
    <property type="RefSeq protein sequence ID" value="NP_056530.2"/>
</dbReference>
<dbReference type="UCSC" id="uc003aka.4">
    <property type="organism name" value="human"/>
</dbReference>
<dbReference type="AGR" id="HGNC:17934"/>
<dbReference type="CTD" id="50487"/>
<dbReference type="DisGeNET" id="50487"/>
<dbReference type="GeneCards" id="PLA2G3"/>
<dbReference type="HGNC" id="HGNC:17934">
    <property type="gene designation" value="PLA2G3"/>
</dbReference>
<dbReference type="HPA" id="ENSG00000100078">
    <property type="expression patterns" value="Tissue enhanced (esophagus, skin, vagina)"/>
</dbReference>
<dbReference type="MIM" id="611651">
    <property type="type" value="gene"/>
</dbReference>
<dbReference type="neXtProt" id="NX_Q9NZ20"/>
<dbReference type="OpenTargets" id="ENSG00000100078"/>
<dbReference type="PharmGKB" id="PA38267"/>
<dbReference type="VEuPathDB" id="HostDB:ENSG00000100078"/>
<dbReference type="eggNOG" id="ENOG502QTYI">
    <property type="taxonomic scope" value="Eukaryota"/>
</dbReference>
<dbReference type="GeneTree" id="ENSGT00940000161662"/>
<dbReference type="HOGENOM" id="CLU_535922_0_0_1"/>
<dbReference type="InParanoid" id="Q9NZ20"/>
<dbReference type="OMA" id="HARWDAH"/>
<dbReference type="OrthoDB" id="10059604at2759"/>
<dbReference type="PAN-GO" id="Q9NZ20">
    <property type="GO annotations" value="0 GO annotations based on evolutionary models"/>
</dbReference>
<dbReference type="PhylomeDB" id="Q9NZ20"/>
<dbReference type="TreeFam" id="TF324679"/>
<dbReference type="PathwayCommons" id="Q9NZ20"/>
<dbReference type="Reactome" id="R-HSA-1482788">
    <property type="pathway name" value="Acyl chain remodelling of PC"/>
</dbReference>
<dbReference type="Reactome" id="R-HSA-1482839">
    <property type="pathway name" value="Acyl chain remodelling of PE"/>
</dbReference>
<dbReference type="Reactome" id="R-HSA-1482925">
    <property type="pathway name" value="Acyl chain remodelling of PG"/>
</dbReference>
<dbReference type="SignaLink" id="Q9NZ20"/>
<dbReference type="BioGRID-ORCS" id="50487">
    <property type="hits" value="6 hits in 1148 CRISPR screens"/>
</dbReference>
<dbReference type="GenomeRNAi" id="50487"/>
<dbReference type="Pharos" id="Q9NZ20">
    <property type="development level" value="Tbio"/>
</dbReference>
<dbReference type="PRO" id="PR:Q9NZ20"/>
<dbReference type="Proteomes" id="UP000005640">
    <property type="component" value="Chromosome 22"/>
</dbReference>
<dbReference type="RNAct" id="Q9NZ20">
    <property type="molecule type" value="protein"/>
</dbReference>
<dbReference type="Bgee" id="ENSG00000100078">
    <property type="expression patterns" value="Expressed in gingival epithelium and 90 other cell types or tissues"/>
</dbReference>
<dbReference type="GO" id="GO:0005814">
    <property type="term" value="C:centriole"/>
    <property type="evidence" value="ECO:0000314"/>
    <property type="project" value="UniProtKB"/>
</dbReference>
<dbReference type="GO" id="GO:0005576">
    <property type="term" value="C:extracellular region"/>
    <property type="evidence" value="ECO:0000304"/>
    <property type="project" value="Reactome"/>
</dbReference>
<dbReference type="GO" id="GO:0005615">
    <property type="term" value="C:extracellular space"/>
    <property type="evidence" value="ECO:0000304"/>
    <property type="project" value="ProtInc"/>
</dbReference>
<dbReference type="GO" id="GO:0005886">
    <property type="term" value="C:plasma membrane"/>
    <property type="evidence" value="ECO:0007669"/>
    <property type="project" value="UniProtKB-SubCell"/>
</dbReference>
<dbReference type="GO" id="GO:0055037">
    <property type="term" value="C:recycling endosome"/>
    <property type="evidence" value="ECO:0000314"/>
    <property type="project" value="UniProtKB"/>
</dbReference>
<dbReference type="GO" id="GO:0047498">
    <property type="term" value="F:calcium-dependent phospholipase A2 activity"/>
    <property type="evidence" value="ECO:0000314"/>
    <property type="project" value="UniProtKB"/>
</dbReference>
<dbReference type="GO" id="GO:0046872">
    <property type="term" value="F:metal ion binding"/>
    <property type="evidence" value="ECO:0007669"/>
    <property type="project" value="UniProtKB-KW"/>
</dbReference>
<dbReference type="GO" id="GO:0001675">
    <property type="term" value="P:acrosome assembly"/>
    <property type="evidence" value="ECO:0007669"/>
    <property type="project" value="Ensembl"/>
</dbReference>
<dbReference type="GO" id="GO:0050482">
    <property type="term" value="P:arachidonate secretion"/>
    <property type="evidence" value="ECO:0007669"/>
    <property type="project" value="InterPro"/>
</dbReference>
<dbReference type="GO" id="GO:0048469">
    <property type="term" value="P:cell maturation"/>
    <property type="evidence" value="ECO:0007669"/>
    <property type="project" value="Ensembl"/>
</dbReference>
<dbReference type="GO" id="GO:0060271">
    <property type="term" value="P:cilium assembly"/>
    <property type="evidence" value="ECO:0000315"/>
    <property type="project" value="UniProtKB"/>
</dbReference>
<dbReference type="GO" id="GO:0034375">
    <property type="term" value="P:high-density lipoprotein particle remodeling"/>
    <property type="evidence" value="ECO:0000314"/>
    <property type="project" value="UniProtKB"/>
</dbReference>
<dbReference type="GO" id="GO:0019372">
    <property type="term" value="P:lipoxygenase pathway"/>
    <property type="evidence" value="ECO:0007669"/>
    <property type="project" value="Ensembl"/>
</dbReference>
<dbReference type="GO" id="GO:0034374">
    <property type="term" value="P:low-density lipoprotein particle remodeling"/>
    <property type="evidence" value="ECO:0000314"/>
    <property type="project" value="UniProtKB"/>
</dbReference>
<dbReference type="GO" id="GO:0042116">
    <property type="term" value="P:macrophage activation"/>
    <property type="evidence" value="ECO:0007669"/>
    <property type="project" value="Ensembl"/>
</dbReference>
<dbReference type="GO" id="GO:0043303">
    <property type="term" value="P:mast cell degranulation"/>
    <property type="evidence" value="ECO:0007669"/>
    <property type="project" value="UniProtKB-KW"/>
</dbReference>
<dbReference type="GO" id="GO:1900222">
    <property type="term" value="P:negative regulation of amyloid-beta clearance"/>
    <property type="evidence" value="ECO:0007669"/>
    <property type="project" value="Ensembl"/>
</dbReference>
<dbReference type="GO" id="GO:0010629">
    <property type="term" value="P:negative regulation of gene expression"/>
    <property type="evidence" value="ECO:0000314"/>
    <property type="project" value="MGI"/>
</dbReference>
<dbReference type="GO" id="GO:0043524">
    <property type="term" value="P:negative regulation of neuron apoptotic process"/>
    <property type="evidence" value="ECO:0000315"/>
    <property type="project" value="UniProtKB"/>
</dbReference>
<dbReference type="GO" id="GO:0046473">
    <property type="term" value="P:phosphatidic acid metabolic process"/>
    <property type="evidence" value="ECO:0000314"/>
    <property type="project" value="UniProtKB"/>
</dbReference>
<dbReference type="GO" id="GO:0046470">
    <property type="term" value="P:phosphatidylcholine metabolic process"/>
    <property type="evidence" value="ECO:0000314"/>
    <property type="project" value="UniProtKB"/>
</dbReference>
<dbReference type="GO" id="GO:0046337">
    <property type="term" value="P:phosphatidylethanolamine metabolic process"/>
    <property type="evidence" value="ECO:0000314"/>
    <property type="project" value="UniProtKB"/>
</dbReference>
<dbReference type="GO" id="GO:0046471">
    <property type="term" value="P:phosphatidylglycerol metabolic process"/>
    <property type="evidence" value="ECO:0000314"/>
    <property type="project" value="UniProtKB"/>
</dbReference>
<dbReference type="GO" id="GO:0046488">
    <property type="term" value="P:phosphatidylinositol metabolic process"/>
    <property type="evidence" value="ECO:0000314"/>
    <property type="project" value="UniProtKB"/>
</dbReference>
<dbReference type="GO" id="GO:0006658">
    <property type="term" value="P:phosphatidylserine metabolic process"/>
    <property type="evidence" value="ECO:0000314"/>
    <property type="project" value="UniProtKB"/>
</dbReference>
<dbReference type="GO" id="GO:0006644">
    <property type="term" value="P:phospholipid metabolic process"/>
    <property type="evidence" value="ECO:0000304"/>
    <property type="project" value="ProtInc"/>
</dbReference>
<dbReference type="GO" id="GO:1900017">
    <property type="term" value="P:positive regulation of cytokine production involved in inflammatory response"/>
    <property type="evidence" value="ECO:0007669"/>
    <property type="project" value="Ensembl"/>
</dbReference>
<dbReference type="GO" id="GO:1903595">
    <property type="term" value="P:positive regulation of histamine secretion by mast cell"/>
    <property type="evidence" value="ECO:0000314"/>
    <property type="project" value="UniProtKB"/>
</dbReference>
<dbReference type="GO" id="GO:0010744">
    <property type="term" value="P:positive regulation of macrophage derived foam cell differentiation"/>
    <property type="evidence" value="ECO:0000314"/>
    <property type="project" value="UniProtKB"/>
</dbReference>
<dbReference type="GO" id="GO:0060376">
    <property type="term" value="P:positive regulation of mast cell differentiation"/>
    <property type="evidence" value="ECO:0007669"/>
    <property type="project" value="Ensembl"/>
</dbReference>
<dbReference type="GO" id="GO:0010976">
    <property type="term" value="P:positive regulation of neuron projection development"/>
    <property type="evidence" value="ECO:0000315"/>
    <property type="project" value="UniProtKB"/>
</dbReference>
<dbReference type="GO" id="GO:0031394">
    <property type="term" value="P:positive regulation of prostaglandin biosynthetic process"/>
    <property type="evidence" value="ECO:0000314"/>
    <property type="project" value="UniProtKB"/>
</dbReference>
<dbReference type="GO" id="GO:0032308">
    <property type="term" value="P:positive regulation of prostaglandin secretion"/>
    <property type="evidence" value="ECO:0007669"/>
    <property type="project" value="Ensembl"/>
</dbReference>
<dbReference type="GO" id="GO:0002532">
    <property type="term" value="P:production of molecular mediator involved in inflammatory response"/>
    <property type="evidence" value="ECO:0007669"/>
    <property type="project" value="Ensembl"/>
</dbReference>
<dbReference type="GO" id="GO:2001135">
    <property type="term" value="P:regulation of endocytic recycling"/>
    <property type="evidence" value="ECO:0000315"/>
    <property type="project" value="UniProtKB"/>
</dbReference>
<dbReference type="GO" id="GO:0007288">
    <property type="term" value="P:sperm axoneme assembly"/>
    <property type="evidence" value="ECO:0007669"/>
    <property type="project" value="Ensembl"/>
</dbReference>
<dbReference type="CDD" id="cd04704">
    <property type="entry name" value="PLA2_bee_venom_like"/>
    <property type="match status" value="1"/>
</dbReference>
<dbReference type="CDD" id="cd04705">
    <property type="entry name" value="PLA2_group_III_like"/>
    <property type="match status" value="1"/>
</dbReference>
<dbReference type="FunFam" id="1.20.90.10:FF:000002">
    <property type="entry name" value="Phospholipase A2 group III"/>
    <property type="match status" value="1"/>
</dbReference>
<dbReference type="FunFam" id="1.20.90.10:FF:000012">
    <property type="entry name" value="Phospholipase A2 group III"/>
    <property type="match status" value="1"/>
</dbReference>
<dbReference type="Gene3D" id="1.20.90.10">
    <property type="entry name" value="Phospholipase A2 domain"/>
    <property type="match status" value="2"/>
</dbReference>
<dbReference type="InterPro" id="IPR016090">
    <property type="entry name" value="PLipase_A2_dom"/>
</dbReference>
<dbReference type="InterPro" id="IPR036444">
    <property type="entry name" value="PLipase_A2_dom_sf"/>
</dbReference>
<dbReference type="InterPro" id="IPR033113">
    <property type="entry name" value="PLipase_A2_His_AS"/>
</dbReference>
<dbReference type="PANTHER" id="PTHR12253">
    <property type="entry name" value="RH14732P"/>
    <property type="match status" value="1"/>
</dbReference>
<dbReference type="Pfam" id="PF05826">
    <property type="entry name" value="Phospholip_A2_2"/>
    <property type="match status" value="2"/>
</dbReference>
<dbReference type="SUPFAM" id="SSF48619">
    <property type="entry name" value="Phospholipase A2, PLA2"/>
    <property type="match status" value="2"/>
</dbReference>
<dbReference type="PROSITE" id="PS00118">
    <property type="entry name" value="PA2_HIS"/>
    <property type="match status" value="1"/>
</dbReference>